<comment type="function">
    <text evidence="1">Catalyzes the attachment of serine to tRNA(Ser). Is also able to aminoacylate tRNA(Sec) with serine, to form the misacylated tRNA L-seryl-tRNA(Sec), which will be further converted into selenocysteinyl-tRNA(Sec).</text>
</comment>
<comment type="catalytic activity">
    <reaction evidence="1">
        <text>tRNA(Ser) + L-serine + ATP = L-seryl-tRNA(Ser) + AMP + diphosphate + H(+)</text>
        <dbReference type="Rhea" id="RHEA:12292"/>
        <dbReference type="Rhea" id="RHEA-COMP:9669"/>
        <dbReference type="Rhea" id="RHEA-COMP:9703"/>
        <dbReference type="ChEBI" id="CHEBI:15378"/>
        <dbReference type="ChEBI" id="CHEBI:30616"/>
        <dbReference type="ChEBI" id="CHEBI:33019"/>
        <dbReference type="ChEBI" id="CHEBI:33384"/>
        <dbReference type="ChEBI" id="CHEBI:78442"/>
        <dbReference type="ChEBI" id="CHEBI:78533"/>
        <dbReference type="ChEBI" id="CHEBI:456215"/>
        <dbReference type="EC" id="6.1.1.11"/>
    </reaction>
</comment>
<comment type="catalytic activity">
    <reaction evidence="1">
        <text>tRNA(Sec) + L-serine + ATP = L-seryl-tRNA(Sec) + AMP + diphosphate + H(+)</text>
        <dbReference type="Rhea" id="RHEA:42580"/>
        <dbReference type="Rhea" id="RHEA-COMP:9742"/>
        <dbReference type="Rhea" id="RHEA-COMP:10128"/>
        <dbReference type="ChEBI" id="CHEBI:15378"/>
        <dbReference type="ChEBI" id="CHEBI:30616"/>
        <dbReference type="ChEBI" id="CHEBI:33019"/>
        <dbReference type="ChEBI" id="CHEBI:33384"/>
        <dbReference type="ChEBI" id="CHEBI:78442"/>
        <dbReference type="ChEBI" id="CHEBI:78533"/>
        <dbReference type="ChEBI" id="CHEBI:456215"/>
        <dbReference type="EC" id="6.1.1.11"/>
    </reaction>
</comment>
<comment type="pathway">
    <text evidence="1">Aminoacyl-tRNA biosynthesis; selenocysteinyl-tRNA(Sec) biosynthesis; L-seryl-tRNA(Sec) from L-serine and tRNA(Sec): step 1/1.</text>
</comment>
<comment type="subunit">
    <text evidence="1">Homodimer. The tRNA molecule binds across the dimer.</text>
</comment>
<comment type="subcellular location">
    <subcellularLocation>
        <location evidence="1">Cytoplasm</location>
    </subcellularLocation>
</comment>
<comment type="domain">
    <text evidence="1">Consists of two distinct domains, a catalytic core and a N-terminal extension that is involved in tRNA binding.</text>
</comment>
<comment type="similarity">
    <text evidence="1">Belongs to the class-II aminoacyl-tRNA synthetase family. Type-1 seryl-tRNA synthetase subfamily.</text>
</comment>
<accession>B8HL86</accession>
<sequence>MIDLKLLRDNPQEFSDRLAKRGKFDLQPILDLDRQQRELEVERSQLQARSNAIAKQIGEKMKSGNKSDPALEGLRAEAGQIKTTLAELEPKEKQLKDELEQQLLLIPNLPSDSTPVGKDEAENVEVRRWGEEYIPKSKDILPHWEMGEKLGILNFERSVKIAQSRFATLIGAGAALERALIQFMLDRHTSAGYLEVLPPFLINSTSLTATGQLPKFAEESFKCEADDLWLAPTAEVPVTNLYRDEILTAENLPIYHCAYTPCFRREAGSYGRDTRGLIRLHQFNKVELVKLVHPSTSEQEHEALVRDASAILEALQLPYRVIELCTGDLGFSAAKCYDLEVWLPSAGCYREISSCSNFYDFQARRGKIRFKESGQKGTQFVHTLNGSGLAVGRTMAAILENYQQPDGSVRIPPVLQPYLGRETL</sequence>
<organism>
    <name type="scientific">Cyanothece sp. (strain PCC 7425 / ATCC 29141)</name>
    <dbReference type="NCBI Taxonomy" id="395961"/>
    <lineage>
        <taxon>Bacteria</taxon>
        <taxon>Bacillati</taxon>
        <taxon>Cyanobacteriota</taxon>
        <taxon>Cyanophyceae</taxon>
        <taxon>Gomontiellales</taxon>
        <taxon>Cyanothecaceae</taxon>
        <taxon>Cyanothece</taxon>
    </lineage>
</organism>
<name>SYS_CYAP4</name>
<reference key="1">
    <citation type="journal article" date="2011" name="MBio">
        <title>Novel metabolic attributes of the genus Cyanothece, comprising a group of unicellular nitrogen-fixing Cyanobacteria.</title>
        <authorList>
            <person name="Bandyopadhyay A."/>
            <person name="Elvitigala T."/>
            <person name="Welsh E."/>
            <person name="Stockel J."/>
            <person name="Liberton M."/>
            <person name="Min H."/>
            <person name="Sherman L.A."/>
            <person name="Pakrasi H.B."/>
        </authorList>
    </citation>
    <scope>NUCLEOTIDE SEQUENCE [LARGE SCALE GENOMIC DNA]</scope>
    <source>
        <strain>PCC 7425 / ATCC 29141</strain>
    </source>
</reference>
<dbReference type="EC" id="6.1.1.11" evidence="1"/>
<dbReference type="EMBL" id="CP001344">
    <property type="protein sequence ID" value="ACL46951.1"/>
    <property type="molecule type" value="Genomic_DNA"/>
</dbReference>
<dbReference type="SMR" id="B8HL86"/>
<dbReference type="STRING" id="395961.Cyan7425_4645"/>
<dbReference type="KEGG" id="cyn:Cyan7425_4645"/>
<dbReference type="eggNOG" id="COG0172">
    <property type="taxonomic scope" value="Bacteria"/>
</dbReference>
<dbReference type="HOGENOM" id="CLU_023797_1_1_3"/>
<dbReference type="OrthoDB" id="9804647at2"/>
<dbReference type="UniPathway" id="UPA00906">
    <property type="reaction ID" value="UER00895"/>
</dbReference>
<dbReference type="GO" id="GO:0005737">
    <property type="term" value="C:cytoplasm"/>
    <property type="evidence" value="ECO:0007669"/>
    <property type="project" value="UniProtKB-SubCell"/>
</dbReference>
<dbReference type="GO" id="GO:0005524">
    <property type="term" value="F:ATP binding"/>
    <property type="evidence" value="ECO:0007669"/>
    <property type="project" value="UniProtKB-UniRule"/>
</dbReference>
<dbReference type="GO" id="GO:0004828">
    <property type="term" value="F:serine-tRNA ligase activity"/>
    <property type="evidence" value="ECO:0007669"/>
    <property type="project" value="UniProtKB-UniRule"/>
</dbReference>
<dbReference type="GO" id="GO:0016260">
    <property type="term" value="P:selenocysteine biosynthetic process"/>
    <property type="evidence" value="ECO:0007669"/>
    <property type="project" value="UniProtKB-UniRule"/>
</dbReference>
<dbReference type="GO" id="GO:0006434">
    <property type="term" value="P:seryl-tRNA aminoacylation"/>
    <property type="evidence" value="ECO:0007669"/>
    <property type="project" value="UniProtKB-UniRule"/>
</dbReference>
<dbReference type="CDD" id="cd00770">
    <property type="entry name" value="SerRS_core"/>
    <property type="match status" value="1"/>
</dbReference>
<dbReference type="Gene3D" id="3.30.930.10">
    <property type="entry name" value="Bira Bifunctional Protein, Domain 2"/>
    <property type="match status" value="1"/>
</dbReference>
<dbReference type="Gene3D" id="1.10.287.40">
    <property type="entry name" value="Serine-tRNA synthetase, tRNA binding domain"/>
    <property type="match status" value="1"/>
</dbReference>
<dbReference type="HAMAP" id="MF_00176">
    <property type="entry name" value="Ser_tRNA_synth_type1"/>
    <property type="match status" value="1"/>
</dbReference>
<dbReference type="InterPro" id="IPR002314">
    <property type="entry name" value="aa-tRNA-synt_IIb"/>
</dbReference>
<dbReference type="InterPro" id="IPR006195">
    <property type="entry name" value="aa-tRNA-synth_II"/>
</dbReference>
<dbReference type="InterPro" id="IPR045864">
    <property type="entry name" value="aa-tRNA-synth_II/BPL/LPL"/>
</dbReference>
<dbReference type="InterPro" id="IPR002317">
    <property type="entry name" value="Ser-tRNA-ligase_type_1"/>
</dbReference>
<dbReference type="InterPro" id="IPR015866">
    <property type="entry name" value="Ser-tRNA-synth_1_N"/>
</dbReference>
<dbReference type="InterPro" id="IPR042103">
    <property type="entry name" value="SerRS_1_N_sf"/>
</dbReference>
<dbReference type="InterPro" id="IPR033729">
    <property type="entry name" value="SerRS_core"/>
</dbReference>
<dbReference type="InterPro" id="IPR010978">
    <property type="entry name" value="tRNA-bd_arm"/>
</dbReference>
<dbReference type="NCBIfam" id="TIGR00414">
    <property type="entry name" value="serS"/>
    <property type="match status" value="1"/>
</dbReference>
<dbReference type="PANTHER" id="PTHR43697:SF1">
    <property type="entry name" value="SERINE--TRNA LIGASE"/>
    <property type="match status" value="1"/>
</dbReference>
<dbReference type="PANTHER" id="PTHR43697">
    <property type="entry name" value="SERYL-TRNA SYNTHETASE"/>
    <property type="match status" value="1"/>
</dbReference>
<dbReference type="Pfam" id="PF02403">
    <property type="entry name" value="Seryl_tRNA_N"/>
    <property type="match status" value="1"/>
</dbReference>
<dbReference type="Pfam" id="PF00587">
    <property type="entry name" value="tRNA-synt_2b"/>
    <property type="match status" value="1"/>
</dbReference>
<dbReference type="PIRSF" id="PIRSF001529">
    <property type="entry name" value="Ser-tRNA-synth_IIa"/>
    <property type="match status" value="1"/>
</dbReference>
<dbReference type="PRINTS" id="PR00981">
    <property type="entry name" value="TRNASYNTHSER"/>
</dbReference>
<dbReference type="SUPFAM" id="SSF55681">
    <property type="entry name" value="Class II aaRS and biotin synthetases"/>
    <property type="match status" value="1"/>
</dbReference>
<dbReference type="SUPFAM" id="SSF46589">
    <property type="entry name" value="tRNA-binding arm"/>
    <property type="match status" value="1"/>
</dbReference>
<dbReference type="PROSITE" id="PS50862">
    <property type="entry name" value="AA_TRNA_LIGASE_II"/>
    <property type="match status" value="1"/>
</dbReference>
<feature type="chain" id="PRO_1000123884" description="Serine--tRNA ligase">
    <location>
        <begin position="1"/>
        <end position="424"/>
    </location>
</feature>
<feature type="binding site" evidence="1">
    <location>
        <begin position="233"/>
        <end position="235"/>
    </location>
    <ligand>
        <name>L-serine</name>
        <dbReference type="ChEBI" id="CHEBI:33384"/>
    </ligand>
</feature>
<feature type="binding site" evidence="1">
    <location>
        <begin position="264"/>
        <end position="266"/>
    </location>
    <ligand>
        <name>ATP</name>
        <dbReference type="ChEBI" id="CHEBI:30616"/>
    </ligand>
</feature>
<feature type="binding site" evidence="1">
    <location>
        <position position="287"/>
    </location>
    <ligand>
        <name>L-serine</name>
        <dbReference type="ChEBI" id="CHEBI:33384"/>
    </ligand>
</feature>
<feature type="binding site" evidence="1">
    <location>
        <begin position="351"/>
        <end position="354"/>
    </location>
    <ligand>
        <name>ATP</name>
        <dbReference type="ChEBI" id="CHEBI:30616"/>
    </ligand>
</feature>
<feature type="binding site" evidence="1">
    <location>
        <position position="387"/>
    </location>
    <ligand>
        <name>L-serine</name>
        <dbReference type="ChEBI" id="CHEBI:33384"/>
    </ligand>
</feature>
<protein>
    <recommendedName>
        <fullName evidence="1">Serine--tRNA ligase</fullName>
        <ecNumber evidence="1">6.1.1.11</ecNumber>
    </recommendedName>
    <alternativeName>
        <fullName evidence="1">Seryl-tRNA synthetase</fullName>
        <shortName evidence="1">SerRS</shortName>
    </alternativeName>
    <alternativeName>
        <fullName evidence="1">Seryl-tRNA(Ser/Sec) synthetase</fullName>
    </alternativeName>
</protein>
<evidence type="ECO:0000255" key="1">
    <source>
        <dbReference type="HAMAP-Rule" id="MF_00176"/>
    </source>
</evidence>
<gene>
    <name evidence="1" type="primary">serS</name>
    <name type="ordered locus">Cyan7425_4645</name>
</gene>
<keyword id="KW-0030">Aminoacyl-tRNA synthetase</keyword>
<keyword id="KW-0067">ATP-binding</keyword>
<keyword id="KW-0963">Cytoplasm</keyword>
<keyword id="KW-0436">Ligase</keyword>
<keyword id="KW-0547">Nucleotide-binding</keyword>
<keyword id="KW-0648">Protein biosynthesis</keyword>
<proteinExistence type="inferred from homology"/>